<comment type="subcellular location">
    <subcellularLocation>
        <location evidence="1">Plastid</location>
        <location evidence="1">Chloroplast thylakoid membrane</location>
        <topology evidence="1">Multi-pass membrane protein</topology>
    </subcellularLocation>
</comment>
<comment type="similarity">
    <text evidence="3">Belongs to the PsaG/PsaK family.</text>
</comment>
<evidence type="ECO:0000250" key="1"/>
<evidence type="ECO:0000255" key="2"/>
<evidence type="ECO:0000305" key="3"/>
<sequence>MATSMMTTLPQFTGLRPQLKPSPIQGLVAAQPMTRRKGKGALGVRCDFIGSSTNVIMVASTTLMLFAGRFGLAPSANRKATAGLKLETRDSGLQTGDPAGFTLADTLACGTVGHIIGVGVVLGLRTLCM</sequence>
<organism>
    <name type="scientific">Medicago sativa</name>
    <name type="common">Alfalfa</name>
    <dbReference type="NCBI Taxonomy" id="3879"/>
    <lineage>
        <taxon>Eukaryota</taxon>
        <taxon>Viridiplantae</taxon>
        <taxon>Streptophyta</taxon>
        <taxon>Embryophyta</taxon>
        <taxon>Tracheophyta</taxon>
        <taxon>Spermatophyta</taxon>
        <taxon>Magnoliopsida</taxon>
        <taxon>eudicotyledons</taxon>
        <taxon>Gunneridae</taxon>
        <taxon>Pentapetalae</taxon>
        <taxon>rosids</taxon>
        <taxon>fabids</taxon>
        <taxon>Fabales</taxon>
        <taxon>Fabaceae</taxon>
        <taxon>Papilionoideae</taxon>
        <taxon>50 kb inversion clade</taxon>
        <taxon>NPAAA clade</taxon>
        <taxon>Hologalegina</taxon>
        <taxon>IRL clade</taxon>
        <taxon>Trifolieae</taxon>
        <taxon>Medicago</taxon>
    </lineage>
</organism>
<dbReference type="EMBL" id="AF084200">
    <property type="protein sequence ID" value="AAC77926.1"/>
    <property type="molecule type" value="mRNA"/>
</dbReference>
<dbReference type="SMR" id="Q9ZT05"/>
<dbReference type="GO" id="GO:0009535">
    <property type="term" value="C:chloroplast thylakoid membrane"/>
    <property type="evidence" value="ECO:0007669"/>
    <property type="project" value="UniProtKB-SubCell"/>
</dbReference>
<dbReference type="GO" id="GO:0009522">
    <property type="term" value="C:photosystem I"/>
    <property type="evidence" value="ECO:0007669"/>
    <property type="project" value="UniProtKB-KW"/>
</dbReference>
<dbReference type="GO" id="GO:0015979">
    <property type="term" value="P:photosynthesis"/>
    <property type="evidence" value="ECO:0007669"/>
    <property type="project" value="UniProtKB-KW"/>
</dbReference>
<dbReference type="Gene3D" id="1.10.286.40">
    <property type="entry name" value="Chlorophyll a-b binding protein like"/>
    <property type="match status" value="1"/>
</dbReference>
<dbReference type="InterPro" id="IPR035982">
    <property type="entry name" value="PSI_centre_PsaK_sf"/>
</dbReference>
<dbReference type="InterPro" id="IPR000549">
    <property type="entry name" value="PSI_PsaG/PsaK"/>
</dbReference>
<dbReference type="InterPro" id="IPR023618">
    <property type="entry name" value="PSI_PsaG/PsaK_dom"/>
</dbReference>
<dbReference type="InterPro" id="IPR016370">
    <property type="entry name" value="PSI_PsaG/PsaK_pln"/>
</dbReference>
<dbReference type="InterPro" id="IPR017493">
    <property type="entry name" value="PSI_PsaK_pln"/>
</dbReference>
<dbReference type="NCBIfam" id="TIGR03050">
    <property type="entry name" value="PS_I_psaK_plant"/>
    <property type="match status" value="1"/>
</dbReference>
<dbReference type="PANTHER" id="PTHR34195:SF2">
    <property type="entry name" value="PHOTOSYSTEM I REACTION CENTER SUBUNIT PSAK, CHLOROPLASTIC"/>
    <property type="match status" value="1"/>
</dbReference>
<dbReference type="PANTHER" id="PTHR34195">
    <property type="entry name" value="PHOTOSYSTEM I REACTION CENTER SUBUNIT V, CHLOROPLASTIC-RELATED"/>
    <property type="match status" value="1"/>
</dbReference>
<dbReference type="Pfam" id="PF01241">
    <property type="entry name" value="PSI_PSAK"/>
    <property type="match status" value="1"/>
</dbReference>
<dbReference type="PIRSF" id="PIRSF002912">
    <property type="entry name" value="PSI_PsaK"/>
    <property type="match status" value="1"/>
</dbReference>
<dbReference type="SUPFAM" id="SSF81563">
    <property type="entry name" value="Photosystem I reaction center subunit X, PsaK"/>
    <property type="match status" value="1"/>
</dbReference>
<dbReference type="PROSITE" id="PS01026">
    <property type="entry name" value="PHOTOSYSTEM_I_PSAGK"/>
    <property type="match status" value="1"/>
</dbReference>
<reference key="1">
    <citation type="submission" date="1998-08" db="EMBL/GenBank/DDBJ databases">
        <title>Gene expression in Medicago sativa shoots.</title>
        <authorList>
            <person name="Stout J.M."/>
            <person name="McKersie B.D."/>
        </authorList>
    </citation>
    <scope>NUCLEOTIDE SEQUENCE [MRNA]</scope>
    <source>
        <strain>cv. N4-4-2</strain>
        <tissue>Shoot</tissue>
    </source>
</reference>
<accession>Q9ZT05</accession>
<proteinExistence type="evidence at transcript level"/>
<protein>
    <recommendedName>
        <fullName>Photosystem I reaction center subunit psaK, chloroplastic</fullName>
    </recommendedName>
    <alternativeName>
        <fullName>PSI-K</fullName>
    </alternativeName>
    <alternativeName>
        <fullName>Photosystem I subunit X</fullName>
    </alternativeName>
</protein>
<name>PSAK_MEDSA</name>
<feature type="transit peptide" description="Chloroplast" evidence="1">
    <location>
        <begin position="1"/>
        <end position="46"/>
    </location>
</feature>
<feature type="chain" id="PRO_0000029395" description="Photosystem I reaction center subunit psaK, chloroplastic">
    <location>
        <begin position="47"/>
        <end position="129"/>
    </location>
</feature>
<feature type="transmembrane region" description="Helical" evidence="2">
    <location>
        <begin position="48"/>
        <end position="68"/>
    </location>
</feature>
<feature type="transmembrane region" description="Helical" evidence="2">
    <location>
        <begin position="104"/>
        <end position="124"/>
    </location>
</feature>
<keyword id="KW-0150">Chloroplast</keyword>
<keyword id="KW-0472">Membrane</keyword>
<keyword id="KW-0602">Photosynthesis</keyword>
<keyword id="KW-0603">Photosystem I</keyword>
<keyword id="KW-0934">Plastid</keyword>
<keyword id="KW-0793">Thylakoid</keyword>
<keyword id="KW-0809">Transit peptide</keyword>
<keyword id="KW-0812">Transmembrane</keyword>
<keyword id="KW-1133">Transmembrane helix</keyword>
<gene>
    <name type="primary">PSAK</name>
</gene>